<keyword id="KW-0002">3D-structure</keyword>
<keyword id="KW-0012">Acyltransferase</keyword>
<keyword id="KW-0133">Cell shape</keyword>
<keyword id="KW-0961">Cell wall biogenesis/degradation</keyword>
<keyword id="KW-0963">Cytoplasm</keyword>
<keyword id="KW-0460">Magnesium</keyword>
<keyword id="KW-0479">Metal-binding</keyword>
<keyword id="KW-0511">Multifunctional enzyme</keyword>
<keyword id="KW-0548">Nucleotidyltransferase</keyword>
<keyword id="KW-0573">Peptidoglycan synthesis</keyword>
<keyword id="KW-1185">Reference proteome</keyword>
<keyword id="KW-0677">Repeat</keyword>
<keyword id="KW-0808">Transferase</keyword>
<evidence type="ECO:0000250" key="1"/>
<evidence type="ECO:0000255" key="2">
    <source>
        <dbReference type="HAMAP-Rule" id="MF_01631"/>
    </source>
</evidence>
<evidence type="ECO:0000269" key="3">
    <source ref="4"/>
</evidence>
<evidence type="ECO:0000305" key="4"/>
<evidence type="ECO:0007829" key="5">
    <source>
        <dbReference type="PDB" id="4FCE"/>
    </source>
</evidence>
<feature type="chain" id="PRO_0000233888" description="Bifunctional protein GlmU">
    <location>
        <begin position="1"/>
        <end position="456"/>
    </location>
</feature>
<feature type="region of interest" description="Pyrophosphorylase" evidence="2">
    <location>
        <begin position="1"/>
        <end position="229"/>
    </location>
</feature>
<feature type="region of interest" description="Linker" evidence="2">
    <location>
        <begin position="230"/>
        <end position="250"/>
    </location>
</feature>
<feature type="region of interest" description="N-acetyltransferase" evidence="2">
    <location>
        <begin position="251"/>
        <end position="456"/>
    </location>
</feature>
<feature type="active site" description="Proton acceptor" evidence="2">
    <location>
        <position position="363"/>
    </location>
</feature>
<feature type="binding site" evidence="2">
    <location>
        <begin position="11"/>
        <end position="14"/>
    </location>
    <ligand>
        <name>UDP-N-acetyl-alpha-D-glucosamine</name>
        <dbReference type="ChEBI" id="CHEBI:57705"/>
    </ligand>
</feature>
<feature type="binding site" evidence="2">
    <location>
        <position position="25"/>
    </location>
    <ligand>
        <name>UDP-N-acetyl-alpha-D-glucosamine</name>
        <dbReference type="ChEBI" id="CHEBI:57705"/>
    </ligand>
</feature>
<feature type="binding site" evidence="2">
    <location>
        <position position="76"/>
    </location>
    <ligand>
        <name>UDP-N-acetyl-alpha-D-glucosamine</name>
        <dbReference type="ChEBI" id="CHEBI:57705"/>
    </ligand>
</feature>
<feature type="binding site" evidence="2">
    <location>
        <begin position="81"/>
        <end position="82"/>
    </location>
    <ligand>
        <name>UDP-N-acetyl-alpha-D-glucosamine</name>
        <dbReference type="ChEBI" id="CHEBI:57705"/>
    </ligand>
</feature>
<feature type="binding site" evidence="2">
    <location>
        <begin position="103"/>
        <end position="105"/>
    </location>
    <ligand>
        <name>UDP-N-acetyl-alpha-D-glucosamine</name>
        <dbReference type="ChEBI" id="CHEBI:57705"/>
    </ligand>
</feature>
<feature type="binding site" evidence="2">
    <location>
        <position position="105"/>
    </location>
    <ligand>
        <name>Mg(2+)</name>
        <dbReference type="ChEBI" id="CHEBI:18420"/>
    </ligand>
</feature>
<feature type="binding site" evidence="2">
    <location>
        <position position="140"/>
    </location>
    <ligand>
        <name>UDP-N-acetyl-alpha-D-glucosamine</name>
        <dbReference type="ChEBI" id="CHEBI:57705"/>
    </ligand>
</feature>
<feature type="binding site" evidence="2">
    <location>
        <position position="154"/>
    </location>
    <ligand>
        <name>UDP-N-acetyl-alpha-D-glucosamine</name>
        <dbReference type="ChEBI" id="CHEBI:57705"/>
    </ligand>
</feature>
<feature type="binding site" evidence="2">
    <location>
        <position position="169"/>
    </location>
    <ligand>
        <name>UDP-N-acetyl-alpha-D-glucosamine</name>
        <dbReference type="ChEBI" id="CHEBI:57705"/>
    </ligand>
</feature>
<feature type="binding site" evidence="2">
    <location>
        <position position="227"/>
    </location>
    <ligand>
        <name>Mg(2+)</name>
        <dbReference type="ChEBI" id="CHEBI:18420"/>
    </ligand>
</feature>
<feature type="binding site" evidence="2">
    <location>
        <position position="227"/>
    </location>
    <ligand>
        <name>UDP-N-acetyl-alpha-D-glucosamine</name>
        <dbReference type="ChEBI" id="CHEBI:57705"/>
    </ligand>
</feature>
<feature type="binding site" evidence="2 3">
    <location>
        <position position="333"/>
    </location>
    <ligand>
        <name>UDP-N-acetyl-alpha-D-glucosamine</name>
        <dbReference type="ChEBI" id="CHEBI:57705"/>
    </ligand>
</feature>
<feature type="binding site" evidence="2 3">
    <location>
        <position position="351"/>
    </location>
    <ligand>
        <name>UDP-N-acetyl-alpha-D-glucosamine</name>
        <dbReference type="ChEBI" id="CHEBI:57705"/>
    </ligand>
</feature>
<feature type="binding site" evidence="2 3">
    <location>
        <position position="366"/>
    </location>
    <ligand>
        <name>UDP-N-acetyl-alpha-D-glucosamine</name>
        <dbReference type="ChEBI" id="CHEBI:57705"/>
    </ligand>
</feature>
<feature type="binding site" evidence="2 3">
    <location>
        <position position="377"/>
    </location>
    <ligand>
        <name>UDP-N-acetyl-alpha-D-glucosamine</name>
        <dbReference type="ChEBI" id="CHEBI:57705"/>
    </ligand>
</feature>
<feature type="binding site" evidence="2">
    <location>
        <position position="380"/>
    </location>
    <ligand>
        <name>acetyl-CoA</name>
        <dbReference type="ChEBI" id="CHEBI:57288"/>
    </ligand>
</feature>
<feature type="binding site" evidence="2">
    <location>
        <begin position="386"/>
        <end position="387"/>
    </location>
    <ligand>
        <name>acetyl-CoA</name>
        <dbReference type="ChEBI" id="CHEBI:57288"/>
    </ligand>
</feature>
<feature type="binding site" evidence="2">
    <location>
        <position position="405"/>
    </location>
    <ligand>
        <name>acetyl-CoA</name>
        <dbReference type="ChEBI" id="CHEBI:57288"/>
    </ligand>
</feature>
<feature type="binding site" evidence="2">
    <location>
        <position position="423"/>
    </location>
    <ligand>
        <name>acetyl-CoA</name>
        <dbReference type="ChEBI" id="CHEBI:57288"/>
    </ligand>
</feature>
<feature type="binding site" evidence="2">
    <location>
        <position position="440"/>
    </location>
    <ligand>
        <name>acetyl-CoA</name>
        <dbReference type="ChEBI" id="CHEBI:57288"/>
    </ligand>
</feature>
<feature type="strand" evidence="5">
    <location>
        <begin position="6"/>
        <end position="12"/>
    </location>
</feature>
<feature type="helix" evidence="5">
    <location>
        <begin position="17"/>
        <end position="19"/>
    </location>
</feature>
<feature type="helix" evidence="5">
    <location>
        <begin position="25"/>
        <end position="27"/>
    </location>
</feature>
<feature type="strand" evidence="5">
    <location>
        <begin position="28"/>
        <end position="30"/>
    </location>
</feature>
<feature type="helix" evidence="5">
    <location>
        <begin position="35"/>
        <end position="46"/>
    </location>
</feature>
<feature type="strand" evidence="5">
    <location>
        <begin position="51"/>
        <end position="57"/>
    </location>
</feature>
<feature type="helix" evidence="5">
    <location>
        <begin position="59"/>
        <end position="65"/>
    </location>
</feature>
<feature type="strand" evidence="5">
    <location>
        <begin position="73"/>
        <end position="75"/>
    </location>
</feature>
<feature type="helix" evidence="5">
    <location>
        <begin position="82"/>
        <end position="89"/>
    </location>
</feature>
<feature type="helix" evidence="5">
    <location>
        <begin position="90"/>
        <end position="92"/>
    </location>
</feature>
<feature type="strand" evidence="5">
    <location>
        <begin position="97"/>
        <end position="103"/>
    </location>
</feature>
<feature type="helix" evidence="5">
    <location>
        <begin position="111"/>
        <end position="120"/>
    </location>
</feature>
<feature type="strand" evidence="5">
    <location>
        <begin position="125"/>
        <end position="132"/>
    </location>
</feature>
<feature type="strand" evidence="5">
    <location>
        <begin position="141"/>
        <end position="145"/>
    </location>
</feature>
<feature type="strand" evidence="5">
    <location>
        <begin position="148"/>
        <end position="153"/>
    </location>
</feature>
<feature type="helix" evidence="5">
    <location>
        <begin position="155"/>
        <end position="157"/>
    </location>
</feature>
<feature type="helix" evidence="5">
    <location>
        <begin position="162"/>
        <end position="164"/>
    </location>
</feature>
<feature type="strand" evidence="5">
    <location>
        <begin position="167"/>
        <end position="176"/>
    </location>
</feature>
<feature type="helix" evidence="5">
    <location>
        <begin position="177"/>
        <end position="185"/>
    </location>
</feature>
<feature type="helix" evidence="5">
    <location>
        <begin position="200"/>
        <end position="207"/>
    </location>
</feature>
<feature type="strand" evidence="5">
    <location>
        <begin position="212"/>
        <end position="215"/>
    </location>
</feature>
<feature type="helix" evidence="5">
    <location>
        <begin position="220"/>
        <end position="223"/>
    </location>
</feature>
<feature type="helix" evidence="5">
    <location>
        <begin position="229"/>
        <end position="250"/>
    </location>
</feature>
<feature type="strand" evidence="5">
    <location>
        <begin position="253"/>
        <end position="255"/>
    </location>
</feature>
<feature type="helix" evidence="5">
    <location>
        <begin position="257"/>
        <end position="259"/>
    </location>
</feature>
<feature type="strand" evidence="5">
    <location>
        <begin position="260"/>
        <end position="268"/>
    </location>
</feature>
<feature type="strand" evidence="5">
    <location>
        <begin position="278"/>
        <end position="286"/>
    </location>
</feature>
<feature type="strand" evidence="5">
    <location>
        <begin position="297"/>
        <end position="300"/>
    </location>
</feature>
<feature type="strand" evidence="5">
    <location>
        <begin position="314"/>
        <end position="317"/>
    </location>
</feature>
<feature type="strand" evidence="5">
    <location>
        <begin position="328"/>
        <end position="332"/>
    </location>
</feature>
<feature type="strand" evidence="5">
    <location>
        <begin position="343"/>
        <end position="355"/>
    </location>
</feature>
<feature type="strand" evidence="5">
    <location>
        <begin position="360"/>
        <end position="372"/>
    </location>
</feature>
<feature type="strand" evidence="5">
    <location>
        <begin position="383"/>
        <end position="385"/>
    </location>
</feature>
<feature type="strand" evidence="5">
    <location>
        <begin position="395"/>
        <end position="397"/>
    </location>
</feature>
<feature type="strand" evidence="5">
    <location>
        <begin position="408"/>
        <end position="415"/>
    </location>
</feature>
<name>GLMU_YERPE</name>
<reference key="1">
    <citation type="journal article" date="2001" name="Nature">
        <title>Genome sequence of Yersinia pestis, the causative agent of plague.</title>
        <authorList>
            <person name="Parkhill J."/>
            <person name="Wren B.W."/>
            <person name="Thomson N.R."/>
            <person name="Titball R.W."/>
            <person name="Holden M.T.G."/>
            <person name="Prentice M.B."/>
            <person name="Sebaihia M."/>
            <person name="James K.D."/>
            <person name="Churcher C.M."/>
            <person name="Mungall K.L."/>
            <person name="Baker S."/>
            <person name="Basham D."/>
            <person name="Bentley S.D."/>
            <person name="Brooks K."/>
            <person name="Cerdeno-Tarraga A.-M."/>
            <person name="Chillingworth T."/>
            <person name="Cronin A."/>
            <person name="Davies R.M."/>
            <person name="Davis P."/>
            <person name="Dougan G."/>
            <person name="Feltwell T."/>
            <person name="Hamlin N."/>
            <person name="Holroyd S."/>
            <person name="Jagels K."/>
            <person name="Karlyshev A.V."/>
            <person name="Leather S."/>
            <person name="Moule S."/>
            <person name="Oyston P.C.F."/>
            <person name="Quail M.A."/>
            <person name="Rutherford K.M."/>
            <person name="Simmonds M."/>
            <person name="Skelton J."/>
            <person name="Stevens K."/>
            <person name="Whitehead S."/>
            <person name="Barrell B.G."/>
        </authorList>
    </citation>
    <scope>NUCLEOTIDE SEQUENCE [LARGE SCALE GENOMIC DNA]</scope>
    <source>
        <strain>CO-92 / Biovar Orientalis</strain>
    </source>
</reference>
<reference key="2">
    <citation type="journal article" date="2002" name="J. Bacteriol.">
        <title>Genome sequence of Yersinia pestis KIM.</title>
        <authorList>
            <person name="Deng W."/>
            <person name="Burland V."/>
            <person name="Plunkett G. III"/>
            <person name="Boutin A."/>
            <person name="Mayhew G.F."/>
            <person name="Liss P."/>
            <person name="Perna N.T."/>
            <person name="Rose D.J."/>
            <person name="Mau B."/>
            <person name="Zhou S."/>
            <person name="Schwartz D.C."/>
            <person name="Fetherston J.D."/>
            <person name="Lindler L.E."/>
            <person name="Brubaker R.R."/>
            <person name="Plano G.V."/>
            <person name="Straley S.C."/>
            <person name="McDonough K.A."/>
            <person name="Nilles M.L."/>
            <person name="Matson J.S."/>
            <person name="Blattner F.R."/>
            <person name="Perry R.D."/>
        </authorList>
    </citation>
    <scope>NUCLEOTIDE SEQUENCE [LARGE SCALE GENOMIC DNA]</scope>
    <source>
        <strain>KIM10+ / Biovar Mediaevalis</strain>
    </source>
</reference>
<reference key="3">
    <citation type="journal article" date="2004" name="DNA Res.">
        <title>Complete genome sequence of Yersinia pestis strain 91001, an isolate avirulent to humans.</title>
        <authorList>
            <person name="Song Y."/>
            <person name="Tong Z."/>
            <person name="Wang J."/>
            <person name="Wang L."/>
            <person name="Guo Z."/>
            <person name="Han Y."/>
            <person name="Zhang J."/>
            <person name="Pei D."/>
            <person name="Zhou D."/>
            <person name="Qin H."/>
            <person name="Pang X."/>
            <person name="Han Y."/>
            <person name="Zhai J."/>
            <person name="Li M."/>
            <person name="Cui B."/>
            <person name="Qi Z."/>
            <person name="Jin L."/>
            <person name="Dai R."/>
            <person name="Chen F."/>
            <person name="Li S."/>
            <person name="Ye C."/>
            <person name="Du Z."/>
            <person name="Lin W."/>
            <person name="Wang J."/>
            <person name="Yu J."/>
            <person name="Yang H."/>
            <person name="Wang J."/>
            <person name="Huang P."/>
            <person name="Yang R."/>
        </authorList>
    </citation>
    <scope>NUCLEOTIDE SEQUENCE [LARGE SCALE GENOMIC DNA]</scope>
    <source>
        <strain>91001 / Biovar Mediaevalis</strain>
    </source>
</reference>
<reference key="4">
    <citation type="submission" date="2012-05" db="PDB data bank">
        <title>Crystal structure of yersinia pestis GlmU in complex with alp glucosamine 1-phosphate (gp1).</title>
        <authorList>
            <person name="Nocek B."/>
            <person name="Kuhn M."/>
            <person name="Gu M."/>
            <person name="Anderson W.F."/>
            <person name="Joachimiak A."/>
        </authorList>
    </citation>
    <scope>X-RAY CRYSTALLOGRAPHY (1.96 ANGSTROMS) IN COMPLEX WITH UDP-GLCNAC ANALOG</scope>
</reference>
<dbReference type="EC" id="2.7.7.23" evidence="2"/>
<dbReference type="EC" id="2.3.1.157" evidence="2"/>
<dbReference type="EMBL" id="AL590842">
    <property type="protein sequence ID" value="CAL22687.1"/>
    <property type="molecule type" value="Genomic_DNA"/>
</dbReference>
<dbReference type="EMBL" id="AE009952">
    <property type="protein sequence ID" value="AAM87675.1"/>
    <property type="status" value="ALT_INIT"/>
    <property type="molecule type" value="Genomic_DNA"/>
</dbReference>
<dbReference type="EMBL" id="AE017042">
    <property type="protein sequence ID" value="AAS64165.1"/>
    <property type="status" value="ALT_INIT"/>
    <property type="molecule type" value="Genomic_DNA"/>
</dbReference>
<dbReference type="PIR" id="AC0500">
    <property type="entry name" value="AC0500"/>
</dbReference>
<dbReference type="RefSeq" id="WP_002215550.1">
    <property type="nucleotide sequence ID" value="NZ_WUCM01000028.1"/>
</dbReference>
<dbReference type="RefSeq" id="YP_002348970.1">
    <property type="nucleotide sequence ID" value="NC_003143.1"/>
</dbReference>
<dbReference type="PDB" id="4FCE">
    <property type="method" value="X-ray"/>
    <property type="resolution" value="1.96 A"/>
    <property type="chains" value="A=1-456"/>
</dbReference>
<dbReference type="PDBsum" id="4FCE"/>
<dbReference type="SMR" id="Q8Z9S7"/>
<dbReference type="IntAct" id="Q8Z9S7">
    <property type="interactions" value="6"/>
</dbReference>
<dbReference type="STRING" id="214092.YPO4119"/>
<dbReference type="PaxDb" id="214092-YPO4119"/>
<dbReference type="DNASU" id="1149080"/>
<dbReference type="EnsemblBacteria" id="AAS64165">
    <property type="protein sequence ID" value="AAS64165"/>
    <property type="gene ID" value="YP_4026"/>
</dbReference>
<dbReference type="GeneID" id="57974605"/>
<dbReference type="KEGG" id="ype:YPO4119"/>
<dbReference type="KEGG" id="ypk:y4133"/>
<dbReference type="KEGG" id="ypm:YP_4026"/>
<dbReference type="PATRIC" id="fig|214092.21.peg.4663"/>
<dbReference type="eggNOG" id="COG1207">
    <property type="taxonomic scope" value="Bacteria"/>
</dbReference>
<dbReference type="HOGENOM" id="CLU_029499_15_2_6"/>
<dbReference type="OrthoDB" id="9775031at2"/>
<dbReference type="UniPathway" id="UPA00113">
    <property type="reaction ID" value="UER00532"/>
</dbReference>
<dbReference type="UniPathway" id="UPA00113">
    <property type="reaction ID" value="UER00533"/>
</dbReference>
<dbReference type="UniPathway" id="UPA00973"/>
<dbReference type="EvolutionaryTrace" id="Q8Z9S7"/>
<dbReference type="Proteomes" id="UP000000815">
    <property type="component" value="Chromosome"/>
</dbReference>
<dbReference type="Proteomes" id="UP000001019">
    <property type="component" value="Chromosome"/>
</dbReference>
<dbReference type="Proteomes" id="UP000002490">
    <property type="component" value="Chromosome"/>
</dbReference>
<dbReference type="GO" id="GO:0005737">
    <property type="term" value="C:cytoplasm"/>
    <property type="evidence" value="ECO:0007669"/>
    <property type="project" value="UniProtKB-SubCell"/>
</dbReference>
<dbReference type="GO" id="GO:0016020">
    <property type="term" value="C:membrane"/>
    <property type="evidence" value="ECO:0007669"/>
    <property type="project" value="GOC"/>
</dbReference>
<dbReference type="GO" id="GO:0019134">
    <property type="term" value="F:glucosamine-1-phosphate N-acetyltransferase activity"/>
    <property type="evidence" value="ECO:0007669"/>
    <property type="project" value="UniProtKB-UniRule"/>
</dbReference>
<dbReference type="GO" id="GO:0000287">
    <property type="term" value="F:magnesium ion binding"/>
    <property type="evidence" value="ECO:0007669"/>
    <property type="project" value="UniProtKB-UniRule"/>
</dbReference>
<dbReference type="GO" id="GO:0003977">
    <property type="term" value="F:UDP-N-acetylglucosamine diphosphorylase activity"/>
    <property type="evidence" value="ECO:0007669"/>
    <property type="project" value="UniProtKB-UniRule"/>
</dbReference>
<dbReference type="GO" id="GO:0000902">
    <property type="term" value="P:cell morphogenesis"/>
    <property type="evidence" value="ECO:0007669"/>
    <property type="project" value="UniProtKB-UniRule"/>
</dbReference>
<dbReference type="GO" id="GO:0071555">
    <property type="term" value="P:cell wall organization"/>
    <property type="evidence" value="ECO:0007669"/>
    <property type="project" value="UniProtKB-KW"/>
</dbReference>
<dbReference type="GO" id="GO:0009245">
    <property type="term" value="P:lipid A biosynthetic process"/>
    <property type="evidence" value="ECO:0007669"/>
    <property type="project" value="UniProtKB-UniRule"/>
</dbReference>
<dbReference type="GO" id="GO:0009252">
    <property type="term" value="P:peptidoglycan biosynthetic process"/>
    <property type="evidence" value="ECO:0007669"/>
    <property type="project" value="UniProtKB-UniRule"/>
</dbReference>
<dbReference type="GO" id="GO:0008360">
    <property type="term" value="P:regulation of cell shape"/>
    <property type="evidence" value="ECO:0007669"/>
    <property type="project" value="UniProtKB-KW"/>
</dbReference>
<dbReference type="GO" id="GO:0006048">
    <property type="term" value="P:UDP-N-acetylglucosamine biosynthetic process"/>
    <property type="evidence" value="ECO:0007669"/>
    <property type="project" value="UniProtKB-UniPathway"/>
</dbReference>
<dbReference type="CDD" id="cd02540">
    <property type="entry name" value="GT2_GlmU_N_bac"/>
    <property type="match status" value="1"/>
</dbReference>
<dbReference type="CDD" id="cd03353">
    <property type="entry name" value="LbH_GlmU_C"/>
    <property type="match status" value="1"/>
</dbReference>
<dbReference type="FunFam" id="2.160.10.10:FF:000011">
    <property type="entry name" value="Bifunctional protein GlmU"/>
    <property type="match status" value="1"/>
</dbReference>
<dbReference type="FunFam" id="3.90.550.10:FF:000006">
    <property type="entry name" value="Bifunctional protein GlmU"/>
    <property type="match status" value="1"/>
</dbReference>
<dbReference type="Gene3D" id="2.160.10.10">
    <property type="entry name" value="Hexapeptide repeat proteins"/>
    <property type="match status" value="1"/>
</dbReference>
<dbReference type="Gene3D" id="3.90.550.10">
    <property type="entry name" value="Spore Coat Polysaccharide Biosynthesis Protein SpsA, Chain A"/>
    <property type="match status" value="1"/>
</dbReference>
<dbReference type="HAMAP" id="MF_01631">
    <property type="entry name" value="GlmU"/>
    <property type="match status" value="1"/>
</dbReference>
<dbReference type="InterPro" id="IPR005882">
    <property type="entry name" value="Bifunctional_GlmU"/>
</dbReference>
<dbReference type="InterPro" id="IPR050065">
    <property type="entry name" value="GlmU-like"/>
</dbReference>
<dbReference type="InterPro" id="IPR038009">
    <property type="entry name" value="GlmU_C_LbH"/>
</dbReference>
<dbReference type="InterPro" id="IPR001451">
    <property type="entry name" value="Hexapep"/>
</dbReference>
<dbReference type="InterPro" id="IPR018357">
    <property type="entry name" value="Hexapep_transf_CS"/>
</dbReference>
<dbReference type="InterPro" id="IPR025877">
    <property type="entry name" value="MobA-like_NTP_Trfase"/>
</dbReference>
<dbReference type="InterPro" id="IPR029044">
    <property type="entry name" value="Nucleotide-diphossugar_trans"/>
</dbReference>
<dbReference type="InterPro" id="IPR011004">
    <property type="entry name" value="Trimer_LpxA-like_sf"/>
</dbReference>
<dbReference type="NCBIfam" id="TIGR01173">
    <property type="entry name" value="glmU"/>
    <property type="match status" value="1"/>
</dbReference>
<dbReference type="NCBIfam" id="NF006986">
    <property type="entry name" value="PRK09451.1"/>
    <property type="match status" value="1"/>
</dbReference>
<dbReference type="PANTHER" id="PTHR43584:SF3">
    <property type="entry name" value="BIFUNCTIONAL PROTEIN GLMU"/>
    <property type="match status" value="1"/>
</dbReference>
<dbReference type="PANTHER" id="PTHR43584">
    <property type="entry name" value="NUCLEOTIDYL TRANSFERASE"/>
    <property type="match status" value="1"/>
</dbReference>
<dbReference type="Pfam" id="PF00132">
    <property type="entry name" value="Hexapep"/>
    <property type="match status" value="1"/>
</dbReference>
<dbReference type="Pfam" id="PF12804">
    <property type="entry name" value="NTP_transf_3"/>
    <property type="match status" value="1"/>
</dbReference>
<dbReference type="SUPFAM" id="SSF53448">
    <property type="entry name" value="Nucleotide-diphospho-sugar transferases"/>
    <property type="match status" value="1"/>
</dbReference>
<dbReference type="SUPFAM" id="SSF51161">
    <property type="entry name" value="Trimeric LpxA-like enzymes"/>
    <property type="match status" value="1"/>
</dbReference>
<dbReference type="PROSITE" id="PS00101">
    <property type="entry name" value="HEXAPEP_TRANSFERASES"/>
    <property type="match status" value="1"/>
</dbReference>
<proteinExistence type="evidence at protein level"/>
<comment type="function">
    <text evidence="2">Catalyzes the last two sequential reactions in the de novo biosynthetic pathway for UDP-N-acetylglucosamine (UDP-GlcNAc). The C-terminal domain catalyzes the transfer of acetyl group from acetyl coenzyme A to glucosamine-1-phosphate (GlcN-1-P) to produce N-acetylglucosamine-1-phosphate (GlcNAc-1-P), which is converted into UDP-GlcNAc by the transfer of uridine 5-monophosphate (from uridine 5-triphosphate), a reaction catalyzed by the N-terminal domain.</text>
</comment>
<comment type="catalytic activity">
    <reaction evidence="2">
        <text>alpha-D-glucosamine 1-phosphate + acetyl-CoA = N-acetyl-alpha-D-glucosamine 1-phosphate + CoA + H(+)</text>
        <dbReference type="Rhea" id="RHEA:13725"/>
        <dbReference type="ChEBI" id="CHEBI:15378"/>
        <dbReference type="ChEBI" id="CHEBI:57287"/>
        <dbReference type="ChEBI" id="CHEBI:57288"/>
        <dbReference type="ChEBI" id="CHEBI:57776"/>
        <dbReference type="ChEBI" id="CHEBI:58516"/>
        <dbReference type="EC" id="2.3.1.157"/>
    </reaction>
</comment>
<comment type="catalytic activity">
    <reaction evidence="2">
        <text>N-acetyl-alpha-D-glucosamine 1-phosphate + UTP + H(+) = UDP-N-acetyl-alpha-D-glucosamine + diphosphate</text>
        <dbReference type="Rhea" id="RHEA:13509"/>
        <dbReference type="ChEBI" id="CHEBI:15378"/>
        <dbReference type="ChEBI" id="CHEBI:33019"/>
        <dbReference type="ChEBI" id="CHEBI:46398"/>
        <dbReference type="ChEBI" id="CHEBI:57705"/>
        <dbReference type="ChEBI" id="CHEBI:57776"/>
        <dbReference type="EC" id="2.7.7.23"/>
    </reaction>
</comment>
<comment type="cofactor">
    <cofactor evidence="1 2">
        <name>Mg(2+)</name>
        <dbReference type="ChEBI" id="CHEBI:18420"/>
    </cofactor>
    <text evidence="1 2">Binds 1 Mg(2+) ion per subunit.</text>
</comment>
<comment type="pathway">
    <text evidence="2">Nucleotide-sugar biosynthesis; UDP-N-acetyl-alpha-D-glucosamine biosynthesis; N-acetyl-alpha-D-glucosamine 1-phosphate from alpha-D-glucosamine 6-phosphate (route II): step 2/2.</text>
</comment>
<comment type="pathway">
    <text evidence="2">Nucleotide-sugar biosynthesis; UDP-N-acetyl-alpha-D-glucosamine biosynthesis; UDP-N-acetyl-alpha-D-glucosamine from N-acetyl-alpha-D-glucosamine 1-phosphate: step 1/1.</text>
</comment>
<comment type="pathway">
    <text evidence="2">Bacterial outer membrane biogenesis; LPS lipid A biosynthesis.</text>
</comment>
<comment type="subunit">
    <text evidence="2">Homotrimer.</text>
</comment>
<comment type="subcellular location">
    <subcellularLocation>
        <location evidence="2">Cytoplasm</location>
    </subcellularLocation>
</comment>
<comment type="similarity">
    <text evidence="2 4">In the N-terminal section; belongs to the N-acetylglucosamine-1-phosphate uridyltransferase family.</text>
</comment>
<comment type="similarity">
    <text evidence="2 4">In the C-terminal section; belongs to the transferase hexapeptide repeat family.</text>
</comment>
<comment type="sequence caution" evidence="4">
    <conflict type="erroneous initiation">
        <sequence resource="EMBL-CDS" id="AAM87675"/>
    </conflict>
    <text>Extended N-terminus.</text>
</comment>
<comment type="sequence caution" evidence="4">
    <conflict type="erroneous initiation">
        <sequence resource="EMBL-CDS" id="AAS64165"/>
    </conflict>
    <text>Extended N-terminus.</text>
</comment>
<organism>
    <name type="scientific">Yersinia pestis</name>
    <dbReference type="NCBI Taxonomy" id="632"/>
    <lineage>
        <taxon>Bacteria</taxon>
        <taxon>Pseudomonadati</taxon>
        <taxon>Pseudomonadota</taxon>
        <taxon>Gammaproteobacteria</taxon>
        <taxon>Enterobacterales</taxon>
        <taxon>Yersiniaceae</taxon>
        <taxon>Yersinia</taxon>
    </lineage>
</organism>
<sequence length="456" mass="48840">MSNSSMSVVILAAGKGTRMYSDLPKVLHPLAGKPMVQHVIDAAMKLGAQHVHLVYGHGGELLKKTLADPSLNWVLQAEQLGTGHAMQQAAPHFADDEDILMLYGDVPLISVDTLQRLLAAKPEGGIGLLTVKLDNPSGYGRIVRENGDVVGIVEHKDASDAQREINEINTGILVANGRDLKRWLSLLDNNNAQGEFYITDIIALAHADGKKIATVHPTRLSEVEGVNNRLQLSALERVFQTEQAEKLLLAGVMLLDPSRFDLRGELTHGRDITIDTNVIIEGHVILGDRVRIGTGCVLKNCVIGDDSEISPYTVLEDARLDANCTVGPFARLRPGAELAEGAHVGNFVEIKKARLGKGSKAGHLSYLGDAEIGAGVNIGAGTITCNYDGANKFKTIIGDDVFVGSDTQLVAPVTVANGATIGAGTTVTRDVAENELVISRVKQVHIQGWKRPVKKK</sequence>
<protein>
    <recommendedName>
        <fullName evidence="2">Bifunctional protein GlmU</fullName>
    </recommendedName>
    <domain>
        <recommendedName>
            <fullName evidence="2">UDP-N-acetylglucosamine pyrophosphorylase</fullName>
            <ecNumber evidence="2">2.7.7.23</ecNumber>
        </recommendedName>
        <alternativeName>
            <fullName evidence="2">N-acetylglucosamine-1-phosphate uridyltransferase</fullName>
        </alternativeName>
    </domain>
    <domain>
        <recommendedName>
            <fullName evidence="2">Glucosamine-1-phosphate N-acetyltransferase</fullName>
            <ecNumber evidence="2">2.3.1.157</ecNumber>
        </recommendedName>
    </domain>
</protein>
<accession>Q8Z9S7</accession>
<accession>Q0W9R8</accession>
<accession>Q74PA2</accession>
<accession>Q8CZF5</accession>
<gene>
    <name evidence="2" type="primary">glmU</name>
    <name type="ordered locus">YPO4119</name>
    <name type="ordered locus">y4133</name>
    <name type="ordered locus">YP_4026</name>
</gene>